<evidence type="ECO:0000250" key="1"/>
<evidence type="ECO:0000250" key="2">
    <source>
        <dbReference type="UniProtKB" id="Q08257"/>
    </source>
</evidence>
<evidence type="ECO:0000305" key="3"/>
<comment type="function">
    <text evidence="1">Does not have alcohol dehydrogenase activity. Binds NADP and acts through a one-electron transfer process. Orthoquinones, such as 1,2-naphthoquinone or 9,10-phenanthrenequinone, are the best substrates (in vitro). May act in the detoxification of xenobiotics. Interacts with (AU)-rich elements (ARE) in the 3'-UTR of target mRNA species and enhances their stability. NADPH binding interferes with mRNA binding (By similarity).</text>
</comment>
<comment type="catalytic activity">
    <reaction>
        <text>2 a quinone + NADPH + H(+) = 2 a 1,4-benzosemiquinone + NADP(+)</text>
        <dbReference type="Rhea" id="RHEA:14269"/>
        <dbReference type="ChEBI" id="CHEBI:15378"/>
        <dbReference type="ChEBI" id="CHEBI:57783"/>
        <dbReference type="ChEBI" id="CHEBI:58349"/>
        <dbReference type="ChEBI" id="CHEBI:132124"/>
        <dbReference type="ChEBI" id="CHEBI:134225"/>
        <dbReference type="EC" id="1.6.5.5"/>
    </reaction>
</comment>
<comment type="subunit">
    <text evidence="1">Homotetramer.</text>
</comment>
<comment type="subcellular location">
    <subcellularLocation>
        <location evidence="1">Cytoplasm</location>
    </subcellularLocation>
</comment>
<comment type="similarity">
    <text evidence="3">Belongs to the zinc-containing alcohol dehydrogenase family. Quinone oxidoreductase subfamily.</text>
</comment>
<sequence length="329" mass="34997">MATGQKLMSAIRVFKFGGPEVMKLQSDVAIPIPKDNQVLIKVHACGVNPVDTYIRSGTHNMKPLLPYTPGLDVAGIVEAVGEHVSSFKKGDRVFTVSTLSGGYAEYALAADDTVYMLPEKLDFKQGAAIGIPYFTACLALLHSACVKAGEIVLIHGASGGVGIAACQIARAYGLKVLGTAGTEEGQNIVLQNGAHEVFNHREVNYIDKIKKSVGEKGIDVIIEMLANVNLSNDLNLLSHGGRVIIVGSRGPIEINPRDTMTKGSSIKGVALYSSTKEEFQQLAAALQAGMEVGWLRPVIGPVYPLEKAAQAHEDIIHSRGATGKMILLL</sequence>
<proteinExistence type="evidence at transcript level"/>
<feature type="initiator methionine" description="Removed" evidence="2">
    <location>
        <position position="1"/>
    </location>
</feature>
<feature type="chain" id="PRO_0000251735" description="Quinone oxidoreductase">
    <location>
        <begin position="2"/>
        <end position="329"/>
    </location>
</feature>
<feature type="binding site" evidence="1">
    <location>
        <position position="53"/>
    </location>
    <ligand>
        <name>NADP(+)</name>
        <dbReference type="ChEBI" id="CHEBI:58349"/>
    </ligand>
</feature>
<feature type="binding site" evidence="1">
    <location>
        <begin position="158"/>
        <end position="161"/>
    </location>
    <ligand>
        <name>NADP(+)</name>
        <dbReference type="ChEBI" id="CHEBI:58349"/>
    </ligand>
</feature>
<feature type="binding site" evidence="1">
    <location>
        <position position="181"/>
    </location>
    <ligand>
        <name>NADP(+)</name>
        <dbReference type="ChEBI" id="CHEBI:58349"/>
    </ligand>
</feature>
<feature type="binding site" evidence="1">
    <location>
        <position position="200"/>
    </location>
    <ligand>
        <name>NADP(+)</name>
        <dbReference type="ChEBI" id="CHEBI:58349"/>
    </ligand>
</feature>
<feature type="binding site" evidence="1">
    <location>
        <position position="229"/>
    </location>
    <ligand>
        <name>NADP(+)</name>
        <dbReference type="ChEBI" id="CHEBI:58349"/>
    </ligand>
</feature>
<feature type="binding site" evidence="1">
    <location>
        <begin position="246"/>
        <end position="249"/>
    </location>
    <ligand>
        <name>NADP(+)</name>
        <dbReference type="ChEBI" id="CHEBI:58349"/>
    </ligand>
</feature>
<feature type="binding site" evidence="1">
    <location>
        <begin position="269"/>
        <end position="271"/>
    </location>
    <ligand>
        <name>NADP(+)</name>
        <dbReference type="ChEBI" id="CHEBI:58349"/>
    </ligand>
</feature>
<feature type="modified residue" description="N-acetylalanine" evidence="2">
    <location>
        <position position="2"/>
    </location>
</feature>
<feature type="modified residue" description="N6-acetyllysine" evidence="2">
    <location>
        <position position="23"/>
    </location>
</feature>
<feature type="modified residue" description="Phosphoserine" evidence="2">
    <location>
        <position position="248"/>
    </location>
</feature>
<dbReference type="EC" id="1.6.5.5"/>
<dbReference type="EMBL" id="DQ841573">
    <property type="protein sequence ID" value="ABH10011.1"/>
    <property type="molecule type" value="mRNA"/>
</dbReference>
<dbReference type="SMR" id="Q0MVN8"/>
<dbReference type="FunCoup" id="Q0MVN8">
    <property type="interactions" value="1520"/>
</dbReference>
<dbReference type="STRING" id="9823.ENSSSCP00000040428"/>
<dbReference type="PaxDb" id="9823-ENSSSCP00000004089"/>
<dbReference type="PeptideAtlas" id="Q0MVN8"/>
<dbReference type="eggNOG" id="KOG1198">
    <property type="taxonomic scope" value="Eukaryota"/>
</dbReference>
<dbReference type="InParanoid" id="Q0MVN8"/>
<dbReference type="Proteomes" id="UP000008227">
    <property type="component" value="Unplaced"/>
</dbReference>
<dbReference type="Proteomes" id="UP000314985">
    <property type="component" value="Unplaced"/>
</dbReference>
<dbReference type="Proteomes" id="UP000694570">
    <property type="component" value="Unplaced"/>
</dbReference>
<dbReference type="Proteomes" id="UP000694571">
    <property type="component" value="Unplaced"/>
</dbReference>
<dbReference type="Proteomes" id="UP000694720">
    <property type="component" value="Unplaced"/>
</dbReference>
<dbReference type="Proteomes" id="UP000694722">
    <property type="component" value="Unplaced"/>
</dbReference>
<dbReference type="Proteomes" id="UP000694723">
    <property type="component" value="Unplaced"/>
</dbReference>
<dbReference type="Proteomes" id="UP000694724">
    <property type="component" value="Unplaced"/>
</dbReference>
<dbReference type="Proteomes" id="UP000694725">
    <property type="component" value="Unplaced"/>
</dbReference>
<dbReference type="Proteomes" id="UP000694726">
    <property type="component" value="Unplaced"/>
</dbReference>
<dbReference type="Proteomes" id="UP000694727">
    <property type="component" value="Unplaced"/>
</dbReference>
<dbReference type="Proteomes" id="UP000694728">
    <property type="component" value="Unplaced"/>
</dbReference>
<dbReference type="GO" id="GO:0005829">
    <property type="term" value="C:cytosol"/>
    <property type="evidence" value="ECO:0000250"/>
    <property type="project" value="UniProtKB"/>
</dbReference>
<dbReference type="GO" id="GO:0003730">
    <property type="term" value="F:mRNA 3'-UTR binding"/>
    <property type="evidence" value="ECO:0000250"/>
    <property type="project" value="UniProtKB"/>
</dbReference>
<dbReference type="GO" id="GO:0070402">
    <property type="term" value="F:NADPH binding"/>
    <property type="evidence" value="ECO:0000250"/>
    <property type="project" value="UniProtKB"/>
</dbReference>
<dbReference type="GO" id="GO:0003960">
    <property type="term" value="F:NADPH:quinone reductase activity"/>
    <property type="evidence" value="ECO:0000250"/>
    <property type="project" value="UniProtKB"/>
</dbReference>
<dbReference type="GO" id="GO:0008270">
    <property type="term" value="F:zinc ion binding"/>
    <property type="evidence" value="ECO:0007669"/>
    <property type="project" value="InterPro"/>
</dbReference>
<dbReference type="GO" id="GO:0042178">
    <property type="term" value="P:xenobiotic catabolic process"/>
    <property type="evidence" value="ECO:0000250"/>
    <property type="project" value="UniProtKB"/>
</dbReference>
<dbReference type="CDD" id="cd08253">
    <property type="entry name" value="zeta_crystallin"/>
    <property type="match status" value="1"/>
</dbReference>
<dbReference type="FunFam" id="3.90.180.10:FF:000072">
    <property type="entry name" value="Crystallin zeta"/>
    <property type="match status" value="1"/>
</dbReference>
<dbReference type="FunFam" id="3.90.180.10:FF:000016">
    <property type="entry name" value="Quinone oxidoreductase"/>
    <property type="match status" value="1"/>
</dbReference>
<dbReference type="FunFam" id="3.40.50.720:FF:000244">
    <property type="entry name" value="quinone oxidoreductase"/>
    <property type="match status" value="1"/>
</dbReference>
<dbReference type="Gene3D" id="3.90.180.10">
    <property type="entry name" value="Medium-chain alcohol dehydrogenases, catalytic domain"/>
    <property type="match status" value="1"/>
</dbReference>
<dbReference type="Gene3D" id="3.40.50.720">
    <property type="entry name" value="NAD(P)-binding Rossmann-like Domain"/>
    <property type="match status" value="1"/>
</dbReference>
<dbReference type="InterPro" id="IPR013149">
    <property type="entry name" value="ADH-like_C"/>
</dbReference>
<dbReference type="InterPro" id="IPR013154">
    <property type="entry name" value="ADH-like_N"/>
</dbReference>
<dbReference type="InterPro" id="IPR011032">
    <property type="entry name" value="GroES-like_sf"/>
</dbReference>
<dbReference type="InterPro" id="IPR036291">
    <property type="entry name" value="NAD(P)-bd_dom_sf"/>
</dbReference>
<dbReference type="InterPro" id="IPR020843">
    <property type="entry name" value="PKS_ER"/>
</dbReference>
<dbReference type="InterPro" id="IPR002364">
    <property type="entry name" value="Quin_OxRdtase/zeta-crystal_CS"/>
</dbReference>
<dbReference type="InterPro" id="IPR051603">
    <property type="entry name" value="Zinc-ADH_QOR/CCCR"/>
</dbReference>
<dbReference type="PANTHER" id="PTHR44154">
    <property type="entry name" value="QUINONE OXIDOREDUCTASE"/>
    <property type="match status" value="1"/>
</dbReference>
<dbReference type="PANTHER" id="PTHR44154:SF1">
    <property type="entry name" value="QUINONE OXIDOREDUCTASE"/>
    <property type="match status" value="1"/>
</dbReference>
<dbReference type="Pfam" id="PF08240">
    <property type="entry name" value="ADH_N"/>
    <property type="match status" value="1"/>
</dbReference>
<dbReference type="Pfam" id="PF00107">
    <property type="entry name" value="ADH_zinc_N"/>
    <property type="match status" value="1"/>
</dbReference>
<dbReference type="SMART" id="SM00829">
    <property type="entry name" value="PKS_ER"/>
    <property type="match status" value="1"/>
</dbReference>
<dbReference type="SUPFAM" id="SSF50129">
    <property type="entry name" value="GroES-like"/>
    <property type="match status" value="1"/>
</dbReference>
<dbReference type="SUPFAM" id="SSF51735">
    <property type="entry name" value="NAD(P)-binding Rossmann-fold domains"/>
    <property type="match status" value="1"/>
</dbReference>
<dbReference type="PROSITE" id="PS01162">
    <property type="entry name" value="QOR_ZETA_CRYSTAL"/>
    <property type="match status" value="1"/>
</dbReference>
<accession>Q0MVN8</accession>
<reference key="1">
    <citation type="submission" date="2006-07" db="EMBL/GenBank/DDBJ databases">
        <title>Sus scrofa renal zeta-crystallin (NADPH quinone reductase) cDNA.</title>
        <authorList>
            <person name="Ibrahim H.M."/>
            <person name="Curthoys N.P."/>
        </authorList>
    </citation>
    <scope>NUCLEOTIDE SEQUENCE [MRNA]</scope>
    <source>
        <tissue>Kidney</tissue>
    </source>
</reference>
<keyword id="KW-0007">Acetylation</keyword>
<keyword id="KW-0963">Cytoplasm</keyword>
<keyword id="KW-0521">NADP</keyword>
<keyword id="KW-0560">Oxidoreductase</keyword>
<keyword id="KW-0597">Phosphoprotein</keyword>
<keyword id="KW-1185">Reference proteome</keyword>
<keyword id="KW-0694">RNA-binding</keyword>
<name>QOR_PIG</name>
<organism>
    <name type="scientific">Sus scrofa</name>
    <name type="common">Pig</name>
    <dbReference type="NCBI Taxonomy" id="9823"/>
    <lineage>
        <taxon>Eukaryota</taxon>
        <taxon>Metazoa</taxon>
        <taxon>Chordata</taxon>
        <taxon>Craniata</taxon>
        <taxon>Vertebrata</taxon>
        <taxon>Euteleostomi</taxon>
        <taxon>Mammalia</taxon>
        <taxon>Eutheria</taxon>
        <taxon>Laurasiatheria</taxon>
        <taxon>Artiodactyla</taxon>
        <taxon>Suina</taxon>
        <taxon>Suidae</taxon>
        <taxon>Sus</taxon>
    </lineage>
</organism>
<gene>
    <name type="primary">CRYZ</name>
</gene>
<protein>
    <recommendedName>
        <fullName>Quinone oxidoreductase</fullName>
        <ecNumber>1.6.5.5</ecNumber>
    </recommendedName>
    <alternativeName>
        <fullName>NADPH:quinone reductase</fullName>
    </alternativeName>
    <alternativeName>
        <fullName>Zeta-crystallin</fullName>
    </alternativeName>
</protein>